<feature type="chain" id="PRO_1000196169" description="Large ribosomal subunit protein bL36">
    <location>
        <begin position="1"/>
        <end position="37"/>
    </location>
</feature>
<dbReference type="EMBL" id="CP001205">
    <property type="protein sequence ID" value="ACK74789.1"/>
    <property type="molecule type" value="Genomic_DNA"/>
</dbReference>
<dbReference type="RefSeq" id="WP_002557090.1">
    <property type="nucleotide sequence ID" value="NC_011728.1"/>
</dbReference>
<dbReference type="SMR" id="B7J264"/>
<dbReference type="GeneID" id="71843317"/>
<dbReference type="KEGG" id="bbz:BbuZS7_0510"/>
<dbReference type="HOGENOM" id="CLU_135723_6_2_12"/>
<dbReference type="Proteomes" id="UP000006901">
    <property type="component" value="Chromosome"/>
</dbReference>
<dbReference type="GO" id="GO:0005737">
    <property type="term" value="C:cytoplasm"/>
    <property type="evidence" value="ECO:0007669"/>
    <property type="project" value="UniProtKB-ARBA"/>
</dbReference>
<dbReference type="GO" id="GO:1990904">
    <property type="term" value="C:ribonucleoprotein complex"/>
    <property type="evidence" value="ECO:0007669"/>
    <property type="project" value="UniProtKB-KW"/>
</dbReference>
<dbReference type="GO" id="GO:0005840">
    <property type="term" value="C:ribosome"/>
    <property type="evidence" value="ECO:0007669"/>
    <property type="project" value="UniProtKB-KW"/>
</dbReference>
<dbReference type="GO" id="GO:0003735">
    <property type="term" value="F:structural constituent of ribosome"/>
    <property type="evidence" value="ECO:0007669"/>
    <property type="project" value="InterPro"/>
</dbReference>
<dbReference type="GO" id="GO:0006412">
    <property type="term" value="P:translation"/>
    <property type="evidence" value="ECO:0007669"/>
    <property type="project" value="UniProtKB-UniRule"/>
</dbReference>
<dbReference type="HAMAP" id="MF_00251">
    <property type="entry name" value="Ribosomal_bL36"/>
    <property type="match status" value="1"/>
</dbReference>
<dbReference type="InterPro" id="IPR000473">
    <property type="entry name" value="Ribosomal_bL36"/>
</dbReference>
<dbReference type="InterPro" id="IPR035977">
    <property type="entry name" value="Ribosomal_bL36_sp"/>
</dbReference>
<dbReference type="NCBIfam" id="TIGR01022">
    <property type="entry name" value="rpmJ_bact"/>
    <property type="match status" value="1"/>
</dbReference>
<dbReference type="PANTHER" id="PTHR42888">
    <property type="entry name" value="50S RIBOSOMAL PROTEIN L36, CHLOROPLASTIC"/>
    <property type="match status" value="1"/>
</dbReference>
<dbReference type="PANTHER" id="PTHR42888:SF1">
    <property type="entry name" value="LARGE RIBOSOMAL SUBUNIT PROTEIN BL36C"/>
    <property type="match status" value="1"/>
</dbReference>
<dbReference type="Pfam" id="PF00444">
    <property type="entry name" value="Ribosomal_L36"/>
    <property type="match status" value="1"/>
</dbReference>
<dbReference type="SUPFAM" id="SSF57840">
    <property type="entry name" value="Ribosomal protein L36"/>
    <property type="match status" value="1"/>
</dbReference>
<dbReference type="PROSITE" id="PS00828">
    <property type="entry name" value="RIBOSOMAL_L36"/>
    <property type="match status" value="1"/>
</dbReference>
<keyword id="KW-0687">Ribonucleoprotein</keyword>
<keyword id="KW-0689">Ribosomal protein</keyword>
<organism>
    <name type="scientific">Borreliella burgdorferi (strain ZS7)</name>
    <name type="common">Borrelia burgdorferi</name>
    <dbReference type="NCBI Taxonomy" id="445985"/>
    <lineage>
        <taxon>Bacteria</taxon>
        <taxon>Pseudomonadati</taxon>
        <taxon>Spirochaetota</taxon>
        <taxon>Spirochaetia</taxon>
        <taxon>Spirochaetales</taxon>
        <taxon>Borreliaceae</taxon>
        <taxon>Borreliella</taxon>
    </lineage>
</organism>
<protein>
    <recommendedName>
        <fullName evidence="1">Large ribosomal subunit protein bL36</fullName>
    </recommendedName>
    <alternativeName>
        <fullName evidence="2">50S ribosomal protein L36</fullName>
    </alternativeName>
</protein>
<name>RL36_BORBZ</name>
<comment type="similarity">
    <text evidence="1">Belongs to the bacterial ribosomal protein bL36 family.</text>
</comment>
<proteinExistence type="inferred from homology"/>
<reference key="1">
    <citation type="journal article" date="2011" name="J. Bacteriol.">
        <title>Whole-genome sequences of thirteen isolates of Borrelia burgdorferi.</title>
        <authorList>
            <person name="Schutzer S.E."/>
            <person name="Fraser-Liggett C.M."/>
            <person name="Casjens S.R."/>
            <person name="Qiu W.G."/>
            <person name="Dunn J.J."/>
            <person name="Mongodin E.F."/>
            <person name="Luft B.J."/>
        </authorList>
    </citation>
    <scope>NUCLEOTIDE SEQUENCE [LARGE SCALE GENOMIC DNA]</scope>
    <source>
        <strain>ZS7</strain>
    </source>
</reference>
<gene>
    <name evidence="1" type="primary">rpmJ</name>
    <name type="ordered locus">BbuZS7_0510</name>
</gene>
<evidence type="ECO:0000255" key="1">
    <source>
        <dbReference type="HAMAP-Rule" id="MF_00251"/>
    </source>
</evidence>
<evidence type="ECO:0000305" key="2"/>
<sequence>MKVRVSVKPICEKCKVIKRKGVLRIICDNLKHKQRQK</sequence>
<accession>B7J264</accession>